<accession>A1WSH6</accession>
<keyword id="KW-0067">ATP-binding</keyword>
<keyword id="KW-0963">Cytoplasm</keyword>
<keyword id="KW-0418">Kinase</keyword>
<keyword id="KW-0545">Nucleotide biosynthesis</keyword>
<keyword id="KW-0547">Nucleotide-binding</keyword>
<keyword id="KW-1185">Reference proteome</keyword>
<keyword id="KW-0808">Transferase</keyword>
<organism>
    <name type="scientific">Verminephrobacter eiseniae (strain EF01-2)</name>
    <dbReference type="NCBI Taxonomy" id="391735"/>
    <lineage>
        <taxon>Bacteria</taxon>
        <taxon>Pseudomonadati</taxon>
        <taxon>Pseudomonadota</taxon>
        <taxon>Betaproteobacteria</taxon>
        <taxon>Burkholderiales</taxon>
        <taxon>Comamonadaceae</taxon>
        <taxon>Verminephrobacter</taxon>
    </lineage>
</organism>
<gene>
    <name evidence="1" type="primary">adk</name>
    <name type="ordered locus">Veis_4895</name>
</gene>
<proteinExistence type="inferred from homology"/>
<feature type="chain" id="PRO_1000058933" description="Adenylate kinase">
    <location>
        <begin position="1"/>
        <end position="218"/>
    </location>
</feature>
<feature type="region of interest" description="NMP" evidence="1">
    <location>
        <begin position="30"/>
        <end position="59"/>
    </location>
</feature>
<feature type="region of interest" description="LID" evidence="1">
    <location>
        <begin position="122"/>
        <end position="159"/>
    </location>
</feature>
<feature type="binding site" evidence="1">
    <location>
        <begin position="10"/>
        <end position="15"/>
    </location>
    <ligand>
        <name>ATP</name>
        <dbReference type="ChEBI" id="CHEBI:30616"/>
    </ligand>
</feature>
<feature type="binding site" evidence="1">
    <location>
        <position position="31"/>
    </location>
    <ligand>
        <name>AMP</name>
        <dbReference type="ChEBI" id="CHEBI:456215"/>
    </ligand>
</feature>
<feature type="binding site" evidence="1">
    <location>
        <position position="36"/>
    </location>
    <ligand>
        <name>AMP</name>
        <dbReference type="ChEBI" id="CHEBI:456215"/>
    </ligand>
</feature>
<feature type="binding site" evidence="1">
    <location>
        <begin position="57"/>
        <end position="59"/>
    </location>
    <ligand>
        <name>AMP</name>
        <dbReference type="ChEBI" id="CHEBI:456215"/>
    </ligand>
</feature>
<feature type="binding site" evidence="1">
    <location>
        <begin position="85"/>
        <end position="88"/>
    </location>
    <ligand>
        <name>AMP</name>
        <dbReference type="ChEBI" id="CHEBI:456215"/>
    </ligand>
</feature>
<feature type="binding site" evidence="1">
    <location>
        <position position="92"/>
    </location>
    <ligand>
        <name>AMP</name>
        <dbReference type="ChEBI" id="CHEBI:456215"/>
    </ligand>
</feature>
<feature type="binding site" evidence="1">
    <location>
        <position position="123"/>
    </location>
    <ligand>
        <name>ATP</name>
        <dbReference type="ChEBI" id="CHEBI:30616"/>
    </ligand>
</feature>
<feature type="binding site" evidence="1">
    <location>
        <begin position="132"/>
        <end position="133"/>
    </location>
    <ligand>
        <name>ATP</name>
        <dbReference type="ChEBI" id="CHEBI:30616"/>
    </ligand>
</feature>
<feature type="binding site" evidence="1">
    <location>
        <position position="156"/>
    </location>
    <ligand>
        <name>AMP</name>
        <dbReference type="ChEBI" id="CHEBI:456215"/>
    </ligand>
</feature>
<feature type="binding site" evidence="1">
    <location>
        <position position="167"/>
    </location>
    <ligand>
        <name>AMP</name>
        <dbReference type="ChEBI" id="CHEBI:456215"/>
    </ligand>
</feature>
<feature type="binding site" evidence="1">
    <location>
        <position position="203"/>
    </location>
    <ligand>
        <name>ATP</name>
        <dbReference type="ChEBI" id="CHEBI:30616"/>
    </ligand>
</feature>
<dbReference type="EC" id="2.7.4.3" evidence="1"/>
<dbReference type="EMBL" id="CP000542">
    <property type="protein sequence ID" value="ABM60583.1"/>
    <property type="molecule type" value="Genomic_DNA"/>
</dbReference>
<dbReference type="RefSeq" id="WP_011812561.1">
    <property type="nucleotide sequence ID" value="NC_008786.1"/>
</dbReference>
<dbReference type="SMR" id="A1WSH6"/>
<dbReference type="STRING" id="391735.Veis_4895"/>
<dbReference type="GeneID" id="76463156"/>
<dbReference type="KEGG" id="vei:Veis_4895"/>
<dbReference type="eggNOG" id="COG0563">
    <property type="taxonomic scope" value="Bacteria"/>
</dbReference>
<dbReference type="HOGENOM" id="CLU_032354_1_2_4"/>
<dbReference type="OrthoDB" id="9805030at2"/>
<dbReference type="UniPathway" id="UPA00588">
    <property type="reaction ID" value="UER00649"/>
</dbReference>
<dbReference type="Proteomes" id="UP000000374">
    <property type="component" value="Chromosome"/>
</dbReference>
<dbReference type="GO" id="GO:0005737">
    <property type="term" value="C:cytoplasm"/>
    <property type="evidence" value="ECO:0007669"/>
    <property type="project" value="UniProtKB-SubCell"/>
</dbReference>
<dbReference type="GO" id="GO:0004017">
    <property type="term" value="F:adenylate kinase activity"/>
    <property type="evidence" value="ECO:0007669"/>
    <property type="project" value="UniProtKB-UniRule"/>
</dbReference>
<dbReference type="GO" id="GO:0005524">
    <property type="term" value="F:ATP binding"/>
    <property type="evidence" value="ECO:0007669"/>
    <property type="project" value="UniProtKB-UniRule"/>
</dbReference>
<dbReference type="GO" id="GO:0044209">
    <property type="term" value="P:AMP salvage"/>
    <property type="evidence" value="ECO:0007669"/>
    <property type="project" value="UniProtKB-UniRule"/>
</dbReference>
<dbReference type="CDD" id="cd01428">
    <property type="entry name" value="ADK"/>
    <property type="match status" value="1"/>
</dbReference>
<dbReference type="FunFam" id="3.40.50.300:FF:000106">
    <property type="entry name" value="Adenylate kinase mitochondrial"/>
    <property type="match status" value="1"/>
</dbReference>
<dbReference type="Gene3D" id="3.40.50.300">
    <property type="entry name" value="P-loop containing nucleotide triphosphate hydrolases"/>
    <property type="match status" value="1"/>
</dbReference>
<dbReference type="HAMAP" id="MF_00235">
    <property type="entry name" value="Adenylate_kinase_Adk"/>
    <property type="match status" value="1"/>
</dbReference>
<dbReference type="InterPro" id="IPR006259">
    <property type="entry name" value="Adenyl_kin_sub"/>
</dbReference>
<dbReference type="InterPro" id="IPR000850">
    <property type="entry name" value="Adenylat/UMP-CMP_kin"/>
</dbReference>
<dbReference type="InterPro" id="IPR033690">
    <property type="entry name" value="Adenylat_kinase_CS"/>
</dbReference>
<dbReference type="InterPro" id="IPR007862">
    <property type="entry name" value="Adenylate_kinase_lid-dom"/>
</dbReference>
<dbReference type="InterPro" id="IPR027417">
    <property type="entry name" value="P-loop_NTPase"/>
</dbReference>
<dbReference type="NCBIfam" id="TIGR01351">
    <property type="entry name" value="adk"/>
    <property type="match status" value="1"/>
</dbReference>
<dbReference type="NCBIfam" id="NF001379">
    <property type="entry name" value="PRK00279.1-1"/>
    <property type="match status" value="1"/>
</dbReference>
<dbReference type="NCBIfam" id="NF001380">
    <property type="entry name" value="PRK00279.1-2"/>
    <property type="match status" value="1"/>
</dbReference>
<dbReference type="NCBIfam" id="NF001381">
    <property type="entry name" value="PRK00279.1-3"/>
    <property type="match status" value="1"/>
</dbReference>
<dbReference type="NCBIfam" id="NF011100">
    <property type="entry name" value="PRK14527.1"/>
    <property type="match status" value="1"/>
</dbReference>
<dbReference type="PANTHER" id="PTHR23359">
    <property type="entry name" value="NUCLEOTIDE KINASE"/>
    <property type="match status" value="1"/>
</dbReference>
<dbReference type="Pfam" id="PF00406">
    <property type="entry name" value="ADK"/>
    <property type="match status" value="1"/>
</dbReference>
<dbReference type="Pfam" id="PF05191">
    <property type="entry name" value="ADK_lid"/>
    <property type="match status" value="1"/>
</dbReference>
<dbReference type="PRINTS" id="PR00094">
    <property type="entry name" value="ADENYLTKNASE"/>
</dbReference>
<dbReference type="SUPFAM" id="SSF52540">
    <property type="entry name" value="P-loop containing nucleoside triphosphate hydrolases"/>
    <property type="match status" value="1"/>
</dbReference>
<dbReference type="PROSITE" id="PS00113">
    <property type="entry name" value="ADENYLATE_KINASE"/>
    <property type="match status" value="1"/>
</dbReference>
<protein>
    <recommendedName>
        <fullName evidence="1">Adenylate kinase</fullName>
        <shortName evidence="1">AK</shortName>
        <ecNumber evidence="1">2.7.4.3</ecNumber>
    </recommendedName>
    <alternativeName>
        <fullName evidence="1">ATP-AMP transphosphorylase</fullName>
    </alternativeName>
    <alternativeName>
        <fullName evidence="1">ATP:AMP phosphotransferase</fullName>
    </alternativeName>
    <alternativeName>
        <fullName evidence="1">Adenylate monophosphate kinase</fullName>
    </alternativeName>
</protein>
<evidence type="ECO:0000255" key="1">
    <source>
        <dbReference type="HAMAP-Rule" id="MF_00235"/>
    </source>
</evidence>
<name>KAD_VEREI</name>
<reference key="1">
    <citation type="submission" date="2006-12" db="EMBL/GenBank/DDBJ databases">
        <title>Complete sequence of chromosome 1 of Verminephrobacter eiseniae EF01-2.</title>
        <authorList>
            <person name="Copeland A."/>
            <person name="Lucas S."/>
            <person name="Lapidus A."/>
            <person name="Barry K."/>
            <person name="Detter J.C."/>
            <person name="Glavina del Rio T."/>
            <person name="Dalin E."/>
            <person name="Tice H."/>
            <person name="Pitluck S."/>
            <person name="Chertkov O."/>
            <person name="Brettin T."/>
            <person name="Bruce D."/>
            <person name="Han C."/>
            <person name="Tapia R."/>
            <person name="Gilna P."/>
            <person name="Schmutz J."/>
            <person name="Larimer F."/>
            <person name="Land M."/>
            <person name="Hauser L."/>
            <person name="Kyrpides N."/>
            <person name="Kim E."/>
            <person name="Stahl D."/>
            <person name="Richardson P."/>
        </authorList>
    </citation>
    <scope>NUCLEOTIDE SEQUENCE [LARGE SCALE GENOMIC DNA]</scope>
    <source>
        <strain>EF01-2</strain>
    </source>
</reference>
<comment type="function">
    <text evidence="1">Catalyzes the reversible transfer of the terminal phosphate group between ATP and AMP. Plays an important role in cellular energy homeostasis and in adenine nucleotide metabolism.</text>
</comment>
<comment type="catalytic activity">
    <reaction evidence="1">
        <text>AMP + ATP = 2 ADP</text>
        <dbReference type="Rhea" id="RHEA:12973"/>
        <dbReference type="ChEBI" id="CHEBI:30616"/>
        <dbReference type="ChEBI" id="CHEBI:456215"/>
        <dbReference type="ChEBI" id="CHEBI:456216"/>
        <dbReference type="EC" id="2.7.4.3"/>
    </reaction>
</comment>
<comment type="pathway">
    <text evidence="1">Purine metabolism; AMP biosynthesis via salvage pathway; AMP from ADP: step 1/1.</text>
</comment>
<comment type="subunit">
    <text evidence="1">Monomer.</text>
</comment>
<comment type="subcellular location">
    <subcellularLocation>
        <location evidence="1">Cytoplasm</location>
    </subcellularLocation>
</comment>
<comment type="domain">
    <text evidence="1">Consists of three domains, a large central CORE domain and two small peripheral domains, NMPbind and LID, which undergo movements during catalysis. The LID domain closes over the site of phosphoryl transfer upon ATP binding. Assembling and dissambling the active center during each catalytic cycle provides an effective means to prevent ATP hydrolysis.</text>
</comment>
<comment type="similarity">
    <text evidence="1">Belongs to the adenylate kinase family.</text>
</comment>
<sequence>MRLILLGAPGAGKGTQAGFICQRYGIPQISTGDMLRAAVKAGTPLGLQAKAVMDSGSLVSDDIIIHLVKERIAQPDCAQGFLFDGFPRTIAQADALKAAGVRLDYVLEIDVPFEAIIERMSGRRSHPASGRTYHVRFNPPKIDGKDDLTGEALLQREDDKEETVRKRLQVYSAQTRPLVDYYSHWARVEPAAAPRYRCISGTGRVDEITARALQALAC</sequence>